<comment type="function">
    <text evidence="1">Catalyzes the phosphorylation of the position 2 hydroxy group of 4-diphosphocytidyl-2C-methyl-D-erythritol.</text>
</comment>
<comment type="catalytic activity">
    <reaction evidence="1">
        <text>4-CDP-2-C-methyl-D-erythritol + ATP = 4-CDP-2-C-methyl-D-erythritol 2-phosphate + ADP + H(+)</text>
        <dbReference type="Rhea" id="RHEA:18437"/>
        <dbReference type="ChEBI" id="CHEBI:15378"/>
        <dbReference type="ChEBI" id="CHEBI:30616"/>
        <dbReference type="ChEBI" id="CHEBI:57823"/>
        <dbReference type="ChEBI" id="CHEBI:57919"/>
        <dbReference type="ChEBI" id="CHEBI:456216"/>
        <dbReference type="EC" id="2.7.1.148"/>
    </reaction>
</comment>
<comment type="pathway">
    <text evidence="1">Isoprenoid biosynthesis; isopentenyl diphosphate biosynthesis via DXP pathway; isopentenyl diphosphate from 1-deoxy-D-xylulose 5-phosphate: step 3/6.</text>
</comment>
<comment type="similarity">
    <text evidence="1">Belongs to the GHMP kinase family. IspE subfamily.</text>
</comment>
<feature type="chain" id="PRO_0000235112" description="4-diphosphocytidyl-2-C-methyl-D-erythritol kinase">
    <location>
        <begin position="1"/>
        <end position="280"/>
    </location>
</feature>
<feature type="active site" evidence="1">
    <location>
        <position position="9"/>
    </location>
</feature>
<feature type="active site" evidence="1">
    <location>
        <position position="135"/>
    </location>
</feature>
<feature type="binding site" evidence="1">
    <location>
        <begin position="93"/>
        <end position="103"/>
    </location>
    <ligand>
        <name>ATP</name>
        <dbReference type="ChEBI" id="CHEBI:30616"/>
    </ligand>
</feature>
<reference key="1">
    <citation type="submission" date="2005-10" db="EMBL/GenBank/DDBJ databases">
        <title>Complete sequence of Pelobacter carbinolicus DSM 2380.</title>
        <authorList>
            <person name="Copeland A."/>
            <person name="Lucas S."/>
            <person name="Lapidus A."/>
            <person name="Barry K."/>
            <person name="Detter J.C."/>
            <person name="Glavina T."/>
            <person name="Hammon N."/>
            <person name="Israni S."/>
            <person name="Pitluck S."/>
            <person name="Chertkov O."/>
            <person name="Schmutz J."/>
            <person name="Larimer F."/>
            <person name="Land M."/>
            <person name="Kyrpides N."/>
            <person name="Ivanova N."/>
            <person name="Richardson P."/>
        </authorList>
    </citation>
    <scope>NUCLEOTIDE SEQUENCE [LARGE SCALE GENOMIC DNA]</scope>
    <source>
        <strain>DSM 2380 / NBRC 103641 / GraBd1</strain>
    </source>
</reference>
<sequence length="280" mass="30219">MESFLAPAKINICLHVLGRREDGYHELAMLMQRVSLYDRISLSFIEGNDIRVQCDGLTLPLGQKNIAARAAQALFDRAGIRRGLDIVIEKNIPVAAGLGGGSSDAATVLMGLNDMLGLGLSATQLMQEGVKLGADVPFFIYKHPAWATGIGDKLQEVEGLPPVWYVLVNPGLEVSTAWVYQNLRLTSARDNLRIPRFSGTVDEVVELLHNDLETVTVERFPLIGEIKQQLLGLGARGALMSGSGSTVFGVFSDGDTARAAAENLSSRSGWRAFAVEPVND</sequence>
<keyword id="KW-0067">ATP-binding</keyword>
<keyword id="KW-0414">Isoprene biosynthesis</keyword>
<keyword id="KW-0418">Kinase</keyword>
<keyword id="KW-0547">Nucleotide-binding</keyword>
<keyword id="KW-1185">Reference proteome</keyword>
<keyword id="KW-0808">Transferase</keyword>
<name>ISPE_SYNC1</name>
<evidence type="ECO:0000255" key="1">
    <source>
        <dbReference type="HAMAP-Rule" id="MF_00061"/>
    </source>
</evidence>
<dbReference type="EC" id="2.7.1.148" evidence="1"/>
<dbReference type="EMBL" id="CP000142">
    <property type="protein sequence ID" value="ABA89246.1"/>
    <property type="molecule type" value="Genomic_DNA"/>
</dbReference>
<dbReference type="RefSeq" id="WP_011341756.1">
    <property type="nucleotide sequence ID" value="NC_007498.2"/>
</dbReference>
<dbReference type="SMR" id="Q3A311"/>
<dbReference type="STRING" id="338963.Pcar_2005"/>
<dbReference type="KEGG" id="pca:Pcar_2005"/>
<dbReference type="eggNOG" id="COG1947">
    <property type="taxonomic scope" value="Bacteria"/>
</dbReference>
<dbReference type="HOGENOM" id="CLU_053057_1_1_7"/>
<dbReference type="OrthoDB" id="9809438at2"/>
<dbReference type="UniPathway" id="UPA00056">
    <property type="reaction ID" value="UER00094"/>
</dbReference>
<dbReference type="Proteomes" id="UP000002534">
    <property type="component" value="Chromosome"/>
</dbReference>
<dbReference type="GO" id="GO:0050515">
    <property type="term" value="F:4-(cytidine 5'-diphospho)-2-C-methyl-D-erythritol kinase activity"/>
    <property type="evidence" value="ECO:0007669"/>
    <property type="project" value="UniProtKB-UniRule"/>
</dbReference>
<dbReference type="GO" id="GO:0005524">
    <property type="term" value="F:ATP binding"/>
    <property type="evidence" value="ECO:0007669"/>
    <property type="project" value="UniProtKB-UniRule"/>
</dbReference>
<dbReference type="GO" id="GO:0019288">
    <property type="term" value="P:isopentenyl diphosphate biosynthetic process, methylerythritol 4-phosphate pathway"/>
    <property type="evidence" value="ECO:0007669"/>
    <property type="project" value="UniProtKB-UniRule"/>
</dbReference>
<dbReference type="GO" id="GO:0016114">
    <property type="term" value="P:terpenoid biosynthetic process"/>
    <property type="evidence" value="ECO:0007669"/>
    <property type="project" value="InterPro"/>
</dbReference>
<dbReference type="Gene3D" id="3.30.230.10">
    <property type="match status" value="1"/>
</dbReference>
<dbReference type="Gene3D" id="3.30.70.890">
    <property type="entry name" value="GHMP kinase, C-terminal domain"/>
    <property type="match status" value="1"/>
</dbReference>
<dbReference type="HAMAP" id="MF_00061">
    <property type="entry name" value="IspE"/>
    <property type="match status" value="1"/>
</dbReference>
<dbReference type="InterPro" id="IPR013750">
    <property type="entry name" value="GHMP_kinase_C_dom"/>
</dbReference>
<dbReference type="InterPro" id="IPR036554">
    <property type="entry name" value="GHMP_kinase_C_sf"/>
</dbReference>
<dbReference type="InterPro" id="IPR006204">
    <property type="entry name" value="GHMP_kinase_N_dom"/>
</dbReference>
<dbReference type="InterPro" id="IPR004424">
    <property type="entry name" value="IspE"/>
</dbReference>
<dbReference type="InterPro" id="IPR020568">
    <property type="entry name" value="Ribosomal_Su5_D2-typ_SF"/>
</dbReference>
<dbReference type="InterPro" id="IPR014721">
    <property type="entry name" value="Ribsml_uS5_D2-typ_fold_subgr"/>
</dbReference>
<dbReference type="NCBIfam" id="TIGR00154">
    <property type="entry name" value="ispE"/>
    <property type="match status" value="1"/>
</dbReference>
<dbReference type="NCBIfam" id="NF011202">
    <property type="entry name" value="PRK14608.1"/>
    <property type="match status" value="1"/>
</dbReference>
<dbReference type="PANTHER" id="PTHR43527">
    <property type="entry name" value="4-DIPHOSPHOCYTIDYL-2-C-METHYL-D-ERYTHRITOL KINASE, CHLOROPLASTIC"/>
    <property type="match status" value="1"/>
</dbReference>
<dbReference type="PANTHER" id="PTHR43527:SF2">
    <property type="entry name" value="4-DIPHOSPHOCYTIDYL-2-C-METHYL-D-ERYTHRITOL KINASE, CHLOROPLASTIC"/>
    <property type="match status" value="1"/>
</dbReference>
<dbReference type="Pfam" id="PF08544">
    <property type="entry name" value="GHMP_kinases_C"/>
    <property type="match status" value="1"/>
</dbReference>
<dbReference type="Pfam" id="PF00288">
    <property type="entry name" value="GHMP_kinases_N"/>
    <property type="match status" value="1"/>
</dbReference>
<dbReference type="PIRSF" id="PIRSF010376">
    <property type="entry name" value="IspE"/>
    <property type="match status" value="1"/>
</dbReference>
<dbReference type="SUPFAM" id="SSF55060">
    <property type="entry name" value="GHMP Kinase, C-terminal domain"/>
    <property type="match status" value="1"/>
</dbReference>
<dbReference type="SUPFAM" id="SSF54211">
    <property type="entry name" value="Ribosomal protein S5 domain 2-like"/>
    <property type="match status" value="1"/>
</dbReference>
<organism>
    <name type="scientific">Syntrophotalea carbinolica (strain DSM 2380 / NBRC 103641 / GraBd1)</name>
    <name type="common">Pelobacter carbinolicus</name>
    <dbReference type="NCBI Taxonomy" id="338963"/>
    <lineage>
        <taxon>Bacteria</taxon>
        <taxon>Pseudomonadati</taxon>
        <taxon>Thermodesulfobacteriota</taxon>
        <taxon>Desulfuromonadia</taxon>
        <taxon>Desulfuromonadales</taxon>
        <taxon>Syntrophotaleaceae</taxon>
        <taxon>Syntrophotalea</taxon>
    </lineage>
</organism>
<gene>
    <name evidence="1" type="primary">ispE</name>
    <name type="ordered locus">Pcar_2005</name>
</gene>
<protein>
    <recommendedName>
        <fullName evidence="1">4-diphosphocytidyl-2-C-methyl-D-erythritol kinase</fullName>
        <shortName evidence="1">CMK</shortName>
        <ecNumber evidence="1">2.7.1.148</ecNumber>
    </recommendedName>
    <alternativeName>
        <fullName evidence="1">4-(cytidine-5'-diphospho)-2-C-methyl-D-erythritol kinase</fullName>
    </alternativeName>
</protein>
<proteinExistence type="inferred from homology"/>
<accession>Q3A311</accession>